<keyword id="KW-0963">Cytoplasm</keyword>
<keyword id="KW-0324">Glycolysis</keyword>
<keyword id="KW-0456">Lyase</keyword>
<keyword id="KW-0460">Magnesium</keyword>
<keyword id="KW-0479">Metal-binding</keyword>
<keyword id="KW-0964">Secreted</keyword>
<protein>
    <recommendedName>
        <fullName evidence="1">Enolase</fullName>
        <ecNumber evidence="1">4.2.1.11</ecNumber>
    </recommendedName>
    <alternativeName>
        <fullName evidence="1">2-phospho-D-glycerate hydro-lyase</fullName>
    </alternativeName>
    <alternativeName>
        <fullName evidence="1">2-phosphoglycerate dehydratase</fullName>
    </alternativeName>
</protein>
<feature type="chain" id="PRO_1000133017" description="Enolase">
    <location>
        <begin position="1"/>
        <end position="425"/>
    </location>
</feature>
<feature type="active site" description="Proton donor" evidence="1">
    <location>
        <position position="205"/>
    </location>
</feature>
<feature type="active site" description="Proton acceptor" evidence="1">
    <location>
        <position position="337"/>
    </location>
</feature>
<feature type="binding site" evidence="1">
    <location>
        <position position="163"/>
    </location>
    <ligand>
        <name>(2R)-2-phosphoglycerate</name>
        <dbReference type="ChEBI" id="CHEBI:58289"/>
    </ligand>
</feature>
<feature type="binding site" evidence="1">
    <location>
        <position position="242"/>
    </location>
    <ligand>
        <name>Mg(2+)</name>
        <dbReference type="ChEBI" id="CHEBI:18420"/>
    </ligand>
</feature>
<feature type="binding site" evidence="1">
    <location>
        <position position="285"/>
    </location>
    <ligand>
        <name>Mg(2+)</name>
        <dbReference type="ChEBI" id="CHEBI:18420"/>
    </ligand>
</feature>
<feature type="binding site" evidence="1">
    <location>
        <position position="312"/>
    </location>
    <ligand>
        <name>Mg(2+)</name>
        <dbReference type="ChEBI" id="CHEBI:18420"/>
    </ligand>
</feature>
<feature type="binding site" evidence="1">
    <location>
        <position position="337"/>
    </location>
    <ligand>
        <name>(2R)-2-phosphoglycerate</name>
        <dbReference type="ChEBI" id="CHEBI:58289"/>
    </ligand>
</feature>
<feature type="binding site" evidence="1">
    <location>
        <position position="366"/>
    </location>
    <ligand>
        <name>(2R)-2-phosphoglycerate</name>
        <dbReference type="ChEBI" id="CHEBI:58289"/>
    </ligand>
</feature>
<feature type="binding site" evidence="1">
    <location>
        <position position="367"/>
    </location>
    <ligand>
        <name>(2R)-2-phosphoglycerate</name>
        <dbReference type="ChEBI" id="CHEBI:58289"/>
    </ligand>
</feature>
<feature type="binding site" evidence="1">
    <location>
        <position position="388"/>
    </location>
    <ligand>
        <name>(2R)-2-phosphoglycerate</name>
        <dbReference type="ChEBI" id="CHEBI:58289"/>
    </ligand>
</feature>
<reference key="1">
    <citation type="journal article" date="2009" name="J. Bacteriol.">
        <title>Complete genome sequence of Rhodobacter sphaeroides KD131.</title>
        <authorList>
            <person name="Lim S.-K."/>
            <person name="Kim S.J."/>
            <person name="Cha S.H."/>
            <person name="Oh Y.-K."/>
            <person name="Rhee H.-J."/>
            <person name="Kim M.-S."/>
            <person name="Lee J.K."/>
        </authorList>
    </citation>
    <scope>NUCLEOTIDE SEQUENCE [LARGE SCALE GENOMIC DNA]</scope>
    <source>
        <strain>KD131 / KCTC 12085</strain>
    </source>
</reference>
<sequence length="425" mass="45523">MSTIIDIHAREILDSRGNPTVEVDVTLESGAFGRAAVPSGASTGAHEAVEKRDGDKSRYMGKGVLEAVAAVNGEIAEMLVGFDATEQVGIDRTMIEMDGTPNKGRLGANAILGVSLAVAKAAAEFTNQPLFRYVGGSSARVLPVPMMNIINGGEHADNPIDIQEFMIMPVAAQNVREAIRMGSEVFHTLKKELAAGGFNTGIGDEGGFAPNISSTREALDYILRSIEKAGYKPGEDIYLALDCASTEYFKGGKYEMKGEGKSLTSAENVDYLAALCADYPIISIEDGCAEDDWEGWKLLTDKLGAKVQLVGDDLFVTNPKRLEQGIKAGVANSMLVKVNQIGSLTETLMAVDMAHRARYTNVMSHRSGETEDATIADLAVATNCGQIKTGSLSRSDRLAKYNQLIRIEEMLGEVAEYAGRSILKV</sequence>
<accession>B9KQU4</accession>
<name>ENO_CERSK</name>
<proteinExistence type="inferred from homology"/>
<evidence type="ECO:0000255" key="1">
    <source>
        <dbReference type="HAMAP-Rule" id="MF_00318"/>
    </source>
</evidence>
<gene>
    <name evidence="1" type="primary">eno</name>
    <name type="ordered locus">RSKD131_0811</name>
</gene>
<dbReference type="EC" id="4.2.1.11" evidence="1"/>
<dbReference type="EMBL" id="CP001150">
    <property type="protein sequence ID" value="ACM00671.1"/>
    <property type="molecule type" value="Genomic_DNA"/>
</dbReference>
<dbReference type="RefSeq" id="WP_002719649.1">
    <property type="nucleotide sequence ID" value="NC_011963.1"/>
</dbReference>
<dbReference type="SMR" id="B9KQU4"/>
<dbReference type="GeneID" id="67446253"/>
<dbReference type="KEGG" id="rsk:RSKD131_0811"/>
<dbReference type="HOGENOM" id="CLU_031223_2_1_5"/>
<dbReference type="UniPathway" id="UPA00109">
    <property type="reaction ID" value="UER00187"/>
</dbReference>
<dbReference type="GO" id="GO:0009986">
    <property type="term" value="C:cell surface"/>
    <property type="evidence" value="ECO:0007669"/>
    <property type="project" value="UniProtKB-SubCell"/>
</dbReference>
<dbReference type="GO" id="GO:0005576">
    <property type="term" value="C:extracellular region"/>
    <property type="evidence" value="ECO:0007669"/>
    <property type="project" value="UniProtKB-SubCell"/>
</dbReference>
<dbReference type="GO" id="GO:0000015">
    <property type="term" value="C:phosphopyruvate hydratase complex"/>
    <property type="evidence" value="ECO:0007669"/>
    <property type="project" value="InterPro"/>
</dbReference>
<dbReference type="GO" id="GO:0000287">
    <property type="term" value="F:magnesium ion binding"/>
    <property type="evidence" value="ECO:0007669"/>
    <property type="project" value="UniProtKB-UniRule"/>
</dbReference>
<dbReference type="GO" id="GO:0004634">
    <property type="term" value="F:phosphopyruvate hydratase activity"/>
    <property type="evidence" value="ECO:0007669"/>
    <property type="project" value="UniProtKB-UniRule"/>
</dbReference>
<dbReference type="GO" id="GO:0006096">
    <property type="term" value="P:glycolytic process"/>
    <property type="evidence" value="ECO:0007669"/>
    <property type="project" value="UniProtKB-UniRule"/>
</dbReference>
<dbReference type="CDD" id="cd03313">
    <property type="entry name" value="enolase"/>
    <property type="match status" value="1"/>
</dbReference>
<dbReference type="FunFam" id="3.20.20.120:FF:000001">
    <property type="entry name" value="Enolase"/>
    <property type="match status" value="1"/>
</dbReference>
<dbReference type="FunFam" id="3.30.390.10:FF:000001">
    <property type="entry name" value="Enolase"/>
    <property type="match status" value="1"/>
</dbReference>
<dbReference type="Gene3D" id="3.20.20.120">
    <property type="entry name" value="Enolase-like C-terminal domain"/>
    <property type="match status" value="1"/>
</dbReference>
<dbReference type="Gene3D" id="3.30.390.10">
    <property type="entry name" value="Enolase-like, N-terminal domain"/>
    <property type="match status" value="1"/>
</dbReference>
<dbReference type="HAMAP" id="MF_00318">
    <property type="entry name" value="Enolase"/>
    <property type="match status" value="1"/>
</dbReference>
<dbReference type="InterPro" id="IPR000941">
    <property type="entry name" value="Enolase"/>
</dbReference>
<dbReference type="InterPro" id="IPR036849">
    <property type="entry name" value="Enolase-like_C_sf"/>
</dbReference>
<dbReference type="InterPro" id="IPR029017">
    <property type="entry name" value="Enolase-like_N"/>
</dbReference>
<dbReference type="InterPro" id="IPR020810">
    <property type="entry name" value="Enolase_C"/>
</dbReference>
<dbReference type="InterPro" id="IPR020809">
    <property type="entry name" value="Enolase_CS"/>
</dbReference>
<dbReference type="InterPro" id="IPR020811">
    <property type="entry name" value="Enolase_N"/>
</dbReference>
<dbReference type="NCBIfam" id="TIGR01060">
    <property type="entry name" value="eno"/>
    <property type="match status" value="1"/>
</dbReference>
<dbReference type="PANTHER" id="PTHR11902">
    <property type="entry name" value="ENOLASE"/>
    <property type="match status" value="1"/>
</dbReference>
<dbReference type="PANTHER" id="PTHR11902:SF1">
    <property type="entry name" value="ENOLASE"/>
    <property type="match status" value="1"/>
</dbReference>
<dbReference type="Pfam" id="PF00113">
    <property type="entry name" value="Enolase_C"/>
    <property type="match status" value="1"/>
</dbReference>
<dbReference type="Pfam" id="PF03952">
    <property type="entry name" value="Enolase_N"/>
    <property type="match status" value="1"/>
</dbReference>
<dbReference type="PIRSF" id="PIRSF001400">
    <property type="entry name" value="Enolase"/>
    <property type="match status" value="1"/>
</dbReference>
<dbReference type="PRINTS" id="PR00148">
    <property type="entry name" value="ENOLASE"/>
</dbReference>
<dbReference type="SFLD" id="SFLDS00001">
    <property type="entry name" value="Enolase"/>
    <property type="match status" value="1"/>
</dbReference>
<dbReference type="SFLD" id="SFLDF00002">
    <property type="entry name" value="enolase"/>
    <property type="match status" value="1"/>
</dbReference>
<dbReference type="SMART" id="SM01192">
    <property type="entry name" value="Enolase_C"/>
    <property type="match status" value="1"/>
</dbReference>
<dbReference type="SMART" id="SM01193">
    <property type="entry name" value="Enolase_N"/>
    <property type="match status" value="1"/>
</dbReference>
<dbReference type="SUPFAM" id="SSF51604">
    <property type="entry name" value="Enolase C-terminal domain-like"/>
    <property type="match status" value="1"/>
</dbReference>
<dbReference type="SUPFAM" id="SSF54826">
    <property type="entry name" value="Enolase N-terminal domain-like"/>
    <property type="match status" value="1"/>
</dbReference>
<dbReference type="PROSITE" id="PS00164">
    <property type="entry name" value="ENOLASE"/>
    <property type="match status" value="1"/>
</dbReference>
<comment type="function">
    <text evidence="1">Catalyzes the reversible conversion of 2-phosphoglycerate (2-PG) into phosphoenolpyruvate (PEP). It is essential for the degradation of carbohydrates via glycolysis.</text>
</comment>
<comment type="catalytic activity">
    <reaction evidence="1">
        <text>(2R)-2-phosphoglycerate = phosphoenolpyruvate + H2O</text>
        <dbReference type="Rhea" id="RHEA:10164"/>
        <dbReference type="ChEBI" id="CHEBI:15377"/>
        <dbReference type="ChEBI" id="CHEBI:58289"/>
        <dbReference type="ChEBI" id="CHEBI:58702"/>
        <dbReference type="EC" id="4.2.1.11"/>
    </reaction>
</comment>
<comment type="cofactor">
    <cofactor evidence="1">
        <name>Mg(2+)</name>
        <dbReference type="ChEBI" id="CHEBI:18420"/>
    </cofactor>
    <text evidence="1">Binds a second Mg(2+) ion via substrate during catalysis.</text>
</comment>
<comment type="pathway">
    <text evidence="1">Carbohydrate degradation; glycolysis; pyruvate from D-glyceraldehyde 3-phosphate: step 4/5.</text>
</comment>
<comment type="subcellular location">
    <subcellularLocation>
        <location evidence="1">Cytoplasm</location>
    </subcellularLocation>
    <subcellularLocation>
        <location evidence="1">Secreted</location>
    </subcellularLocation>
    <subcellularLocation>
        <location evidence="1">Cell surface</location>
    </subcellularLocation>
    <text evidence="1">Fractions of enolase are present in both the cytoplasm and on the cell surface.</text>
</comment>
<comment type="similarity">
    <text evidence="1">Belongs to the enolase family.</text>
</comment>
<organism>
    <name type="scientific">Cereibacter sphaeroides (strain KD131 / KCTC 12085)</name>
    <name type="common">Rhodobacter sphaeroides</name>
    <dbReference type="NCBI Taxonomy" id="557760"/>
    <lineage>
        <taxon>Bacteria</taxon>
        <taxon>Pseudomonadati</taxon>
        <taxon>Pseudomonadota</taxon>
        <taxon>Alphaproteobacteria</taxon>
        <taxon>Rhodobacterales</taxon>
        <taxon>Paracoccaceae</taxon>
        <taxon>Cereibacter</taxon>
    </lineage>
</organism>